<feature type="chain" id="PRO_0000381910" description="Polyribonucleotide nucleotidyltransferase">
    <location>
        <begin position="1"/>
        <end position="728"/>
    </location>
</feature>
<feature type="domain" description="KH" evidence="1">
    <location>
        <begin position="580"/>
        <end position="640"/>
    </location>
</feature>
<feature type="domain" description="S1 motif" evidence="1">
    <location>
        <begin position="650"/>
        <end position="724"/>
    </location>
</feature>
<feature type="binding site" evidence="1">
    <location>
        <position position="513"/>
    </location>
    <ligand>
        <name>Mg(2+)</name>
        <dbReference type="ChEBI" id="CHEBI:18420"/>
    </ligand>
</feature>
<feature type="binding site" evidence="1">
    <location>
        <position position="519"/>
    </location>
    <ligand>
        <name>Mg(2+)</name>
        <dbReference type="ChEBI" id="CHEBI:18420"/>
    </ligand>
</feature>
<dbReference type="EC" id="2.7.7.8" evidence="1"/>
<dbReference type="EMBL" id="CU469464">
    <property type="protein sequence ID" value="CAP18568.1"/>
    <property type="molecule type" value="Genomic_DNA"/>
</dbReference>
<dbReference type="SMR" id="B3QZG1"/>
<dbReference type="STRING" id="37692.ATP_00381"/>
<dbReference type="KEGG" id="pml:ATP_00381"/>
<dbReference type="eggNOG" id="COG1185">
    <property type="taxonomic scope" value="Bacteria"/>
</dbReference>
<dbReference type="HOGENOM" id="CLU_004217_2_2_14"/>
<dbReference type="Proteomes" id="UP000002020">
    <property type="component" value="Chromosome"/>
</dbReference>
<dbReference type="GO" id="GO:0005829">
    <property type="term" value="C:cytosol"/>
    <property type="evidence" value="ECO:0007669"/>
    <property type="project" value="TreeGrafter"/>
</dbReference>
<dbReference type="GO" id="GO:0000175">
    <property type="term" value="F:3'-5'-RNA exonuclease activity"/>
    <property type="evidence" value="ECO:0007669"/>
    <property type="project" value="TreeGrafter"/>
</dbReference>
<dbReference type="GO" id="GO:0000287">
    <property type="term" value="F:magnesium ion binding"/>
    <property type="evidence" value="ECO:0007669"/>
    <property type="project" value="UniProtKB-UniRule"/>
</dbReference>
<dbReference type="GO" id="GO:0004654">
    <property type="term" value="F:polyribonucleotide nucleotidyltransferase activity"/>
    <property type="evidence" value="ECO:0007669"/>
    <property type="project" value="UniProtKB-UniRule"/>
</dbReference>
<dbReference type="GO" id="GO:0003723">
    <property type="term" value="F:RNA binding"/>
    <property type="evidence" value="ECO:0007669"/>
    <property type="project" value="UniProtKB-UniRule"/>
</dbReference>
<dbReference type="GO" id="GO:0006402">
    <property type="term" value="P:mRNA catabolic process"/>
    <property type="evidence" value="ECO:0007669"/>
    <property type="project" value="UniProtKB-UniRule"/>
</dbReference>
<dbReference type="GO" id="GO:0006396">
    <property type="term" value="P:RNA processing"/>
    <property type="evidence" value="ECO:0007669"/>
    <property type="project" value="InterPro"/>
</dbReference>
<dbReference type="CDD" id="cd02393">
    <property type="entry name" value="KH-I_PNPase"/>
    <property type="match status" value="1"/>
</dbReference>
<dbReference type="CDD" id="cd11364">
    <property type="entry name" value="RNase_PH_PNPase_2"/>
    <property type="match status" value="1"/>
</dbReference>
<dbReference type="FunFam" id="3.30.1370.10:FF:000001">
    <property type="entry name" value="Polyribonucleotide nucleotidyltransferase"/>
    <property type="match status" value="1"/>
</dbReference>
<dbReference type="FunFam" id="3.30.230.70:FF:000001">
    <property type="entry name" value="Polyribonucleotide nucleotidyltransferase"/>
    <property type="match status" value="1"/>
</dbReference>
<dbReference type="FunFam" id="3.30.230.70:FF:000002">
    <property type="entry name" value="Polyribonucleotide nucleotidyltransferase"/>
    <property type="match status" value="1"/>
</dbReference>
<dbReference type="Gene3D" id="3.30.230.70">
    <property type="entry name" value="GHMP Kinase, N-terminal domain"/>
    <property type="match status" value="2"/>
</dbReference>
<dbReference type="Gene3D" id="3.30.1370.10">
    <property type="entry name" value="K Homology domain, type 1"/>
    <property type="match status" value="1"/>
</dbReference>
<dbReference type="Gene3D" id="2.40.50.140">
    <property type="entry name" value="Nucleic acid-binding proteins"/>
    <property type="match status" value="1"/>
</dbReference>
<dbReference type="HAMAP" id="MF_01595">
    <property type="entry name" value="PNPase"/>
    <property type="match status" value="1"/>
</dbReference>
<dbReference type="InterPro" id="IPR001247">
    <property type="entry name" value="ExoRNase_PH_dom1"/>
</dbReference>
<dbReference type="InterPro" id="IPR015847">
    <property type="entry name" value="ExoRNase_PH_dom2"/>
</dbReference>
<dbReference type="InterPro" id="IPR036345">
    <property type="entry name" value="ExoRNase_PH_dom2_sf"/>
</dbReference>
<dbReference type="InterPro" id="IPR004087">
    <property type="entry name" value="KH_dom"/>
</dbReference>
<dbReference type="InterPro" id="IPR004088">
    <property type="entry name" value="KH_dom_type_1"/>
</dbReference>
<dbReference type="InterPro" id="IPR036612">
    <property type="entry name" value="KH_dom_type_1_sf"/>
</dbReference>
<dbReference type="InterPro" id="IPR012340">
    <property type="entry name" value="NA-bd_OB-fold"/>
</dbReference>
<dbReference type="InterPro" id="IPR012162">
    <property type="entry name" value="PNPase"/>
</dbReference>
<dbReference type="InterPro" id="IPR027408">
    <property type="entry name" value="PNPase/RNase_PH_dom_sf"/>
</dbReference>
<dbReference type="InterPro" id="IPR036456">
    <property type="entry name" value="PNPase_PH_RNA-bd_sf"/>
</dbReference>
<dbReference type="InterPro" id="IPR020568">
    <property type="entry name" value="Ribosomal_Su5_D2-typ_SF"/>
</dbReference>
<dbReference type="InterPro" id="IPR003029">
    <property type="entry name" value="S1_domain"/>
</dbReference>
<dbReference type="NCBIfam" id="TIGR03591">
    <property type="entry name" value="polynuc_phos"/>
    <property type="match status" value="1"/>
</dbReference>
<dbReference type="NCBIfam" id="NF008805">
    <property type="entry name" value="PRK11824.1"/>
    <property type="match status" value="1"/>
</dbReference>
<dbReference type="PANTHER" id="PTHR11252">
    <property type="entry name" value="POLYRIBONUCLEOTIDE NUCLEOTIDYLTRANSFERASE"/>
    <property type="match status" value="1"/>
</dbReference>
<dbReference type="PANTHER" id="PTHR11252:SF0">
    <property type="entry name" value="POLYRIBONUCLEOTIDE NUCLEOTIDYLTRANSFERASE 1, MITOCHONDRIAL"/>
    <property type="match status" value="1"/>
</dbReference>
<dbReference type="Pfam" id="PF00013">
    <property type="entry name" value="KH_1"/>
    <property type="match status" value="1"/>
</dbReference>
<dbReference type="Pfam" id="PF01138">
    <property type="entry name" value="RNase_PH"/>
    <property type="match status" value="2"/>
</dbReference>
<dbReference type="Pfam" id="PF03725">
    <property type="entry name" value="RNase_PH_C"/>
    <property type="match status" value="1"/>
</dbReference>
<dbReference type="Pfam" id="PF00575">
    <property type="entry name" value="S1"/>
    <property type="match status" value="1"/>
</dbReference>
<dbReference type="PIRSF" id="PIRSF005499">
    <property type="entry name" value="PNPase"/>
    <property type="match status" value="1"/>
</dbReference>
<dbReference type="SMART" id="SM00322">
    <property type="entry name" value="KH"/>
    <property type="match status" value="1"/>
</dbReference>
<dbReference type="SMART" id="SM00316">
    <property type="entry name" value="S1"/>
    <property type="match status" value="1"/>
</dbReference>
<dbReference type="SUPFAM" id="SSF54791">
    <property type="entry name" value="Eukaryotic type KH-domain (KH-domain type I)"/>
    <property type="match status" value="1"/>
</dbReference>
<dbReference type="SUPFAM" id="SSF50249">
    <property type="entry name" value="Nucleic acid-binding proteins"/>
    <property type="match status" value="1"/>
</dbReference>
<dbReference type="SUPFAM" id="SSF46915">
    <property type="entry name" value="Polynucleotide phosphorylase/guanosine pentaphosphate synthase (PNPase/GPSI), domain 3"/>
    <property type="match status" value="1"/>
</dbReference>
<dbReference type="SUPFAM" id="SSF55666">
    <property type="entry name" value="Ribonuclease PH domain 2-like"/>
    <property type="match status" value="2"/>
</dbReference>
<dbReference type="SUPFAM" id="SSF54211">
    <property type="entry name" value="Ribosomal protein S5 domain 2-like"/>
    <property type="match status" value="2"/>
</dbReference>
<dbReference type="PROSITE" id="PS50084">
    <property type="entry name" value="KH_TYPE_1"/>
    <property type="match status" value="1"/>
</dbReference>
<dbReference type="PROSITE" id="PS50126">
    <property type="entry name" value="S1"/>
    <property type="match status" value="1"/>
</dbReference>
<comment type="function">
    <text evidence="1">Involved in mRNA degradation. Catalyzes the phosphorolysis of single-stranded polyribonucleotides processively in the 3'- to 5'-direction.</text>
</comment>
<comment type="catalytic activity">
    <reaction evidence="1">
        <text>RNA(n+1) + phosphate = RNA(n) + a ribonucleoside 5'-diphosphate</text>
        <dbReference type="Rhea" id="RHEA:22096"/>
        <dbReference type="Rhea" id="RHEA-COMP:14527"/>
        <dbReference type="Rhea" id="RHEA-COMP:17342"/>
        <dbReference type="ChEBI" id="CHEBI:43474"/>
        <dbReference type="ChEBI" id="CHEBI:57930"/>
        <dbReference type="ChEBI" id="CHEBI:140395"/>
        <dbReference type="EC" id="2.7.7.8"/>
    </reaction>
</comment>
<comment type="cofactor">
    <cofactor evidence="1">
        <name>Mg(2+)</name>
        <dbReference type="ChEBI" id="CHEBI:18420"/>
    </cofactor>
</comment>
<comment type="subcellular location">
    <subcellularLocation>
        <location evidence="1">Cytoplasm</location>
    </subcellularLocation>
</comment>
<comment type="similarity">
    <text evidence="1">Belongs to the polyribonucleotide nucleotidyltransferase family.</text>
</comment>
<reference key="1">
    <citation type="journal article" date="2008" name="BMC Genomics">
        <title>The linear chromosome of the plant-pathogenic mycoplasma 'Candidatus Phytoplasma mali'.</title>
        <authorList>
            <person name="Kube M."/>
            <person name="Schneider B."/>
            <person name="Kuhl H."/>
            <person name="Dandekar T."/>
            <person name="Heitmann K."/>
            <person name="Migdoll A.M."/>
            <person name="Reinhardt R."/>
            <person name="Seemueller E."/>
        </authorList>
    </citation>
    <scope>NUCLEOTIDE SEQUENCE [LARGE SCALE GENOMIC DNA]</scope>
    <source>
        <strain>AT</strain>
    </source>
</reference>
<name>PNP_PHYMT</name>
<organism>
    <name type="scientific">Phytoplasma mali (strain AT)</name>
    <dbReference type="NCBI Taxonomy" id="482235"/>
    <lineage>
        <taxon>Bacteria</taxon>
        <taxon>Bacillati</taxon>
        <taxon>Mycoplasmatota</taxon>
        <taxon>Mollicutes</taxon>
        <taxon>Acholeplasmatales</taxon>
        <taxon>Acholeplasmataceae</taxon>
        <taxon>Candidatus Phytoplasma</taxon>
        <taxon>16SrX (Apple proliferation group)</taxon>
    </lineage>
</organism>
<protein>
    <recommendedName>
        <fullName evidence="1">Polyribonucleotide nucleotidyltransferase</fullName>
        <ecNumber evidence="1">2.7.7.8</ecNumber>
    </recommendedName>
    <alternativeName>
        <fullName evidence="1">Polynucleotide phosphorylase</fullName>
        <shortName evidence="1">PNPase</shortName>
    </alternativeName>
</protein>
<proteinExistence type="inferred from homology"/>
<evidence type="ECO:0000255" key="1">
    <source>
        <dbReference type="HAMAP-Rule" id="MF_01595"/>
    </source>
</evidence>
<accession>B3QZG1</accession>
<gene>
    <name evidence="1" type="primary">pnp</name>
    <name type="ordered locus">ATP_00381</name>
</gene>
<keyword id="KW-0963">Cytoplasm</keyword>
<keyword id="KW-0460">Magnesium</keyword>
<keyword id="KW-0479">Metal-binding</keyword>
<keyword id="KW-0548">Nucleotidyltransferase</keyword>
<keyword id="KW-1185">Reference proteome</keyword>
<keyword id="KW-0694">RNA-binding</keyword>
<keyword id="KW-0808">Transferase</keyword>
<sequence>MDLNTKNNNKKVFEIIFENNVLRIEIGEISRQANGSVMLFYKDTVILSVAVCGDKKNSLNFLPLTVNYQEKLYAAGKIPGGFLRREGKPSDQEILCSRLIDRTIRPLFSKNFKNEVQLINMVLSSDPDGNNENIALLGSSLALLISDIPFFEPVSSVCVGKIGDNLIINPTLSQRENSSFFLILAGTKDSLNMVEMSSKEISENNFLESIKFGHEIIKKLCLFQTEIANQIGKTKIKIPLHNVNNLLEVEIKDKYFSEIEMILKNKCNVNNVKKSDILKKLKENVLENYKEKFLNNKKDNFNLLDLENQKLYLNEVEIIFDFLVRTIIRETILKENIRPDGRNSSEIRSITSRIDILPRTHGSALFTRGGTQSLAIVTLGTLRESKIIDDLSDEVDKRFMLHYNFPAFAVGSVGRYLAPSRREIGHGMLAEKALECVLPSENDFPYSIRVVSEILDSNGSSSQATICASSMALMSAGVPLKSLVAGVAMGLIVDDIDKINHYTILSDIEGLEDYQGDIDFKIAGTKVGITALQLDIKIKGITLEIFEKVLEQAKKDRIKILNEMEKVINKSRNEVSKYAPKVKMILIKPEKIRDIIGSGGKIINQIIEKHDNVKIDIMQDGKIYIMHQNMEIVDLTVTYIQNFLKKIKVENVYEVKILRFVKDKMDKTFGAIAEIFPGIEGFIHISKLENYKVDKVEDVLKIGQIILVKCIKINERGQIDLSKKDVFK</sequence>